<sequence length="150" mass="17100">MNESIDINQIFTLLPHRYPFILVDRVIDYKVMEYLIAIKNVTINENFFTGHFPGNPIMPGVLMLEALAQACGILANLSRQPKEGYEFLHYFAGIDNARFKQVVIPGDQLRLEVRLAGQKRDFWRMHGEAYIGDKLACSADLLSAAKEIKK</sequence>
<organism>
    <name type="scientific">Legionella pneumophila (strain Paris)</name>
    <dbReference type="NCBI Taxonomy" id="297246"/>
    <lineage>
        <taxon>Bacteria</taxon>
        <taxon>Pseudomonadati</taxon>
        <taxon>Pseudomonadota</taxon>
        <taxon>Gammaproteobacteria</taxon>
        <taxon>Legionellales</taxon>
        <taxon>Legionellaceae</taxon>
        <taxon>Legionella</taxon>
    </lineage>
</organism>
<feature type="chain" id="PRO_0000091694" description="3-hydroxyacyl-[acyl-carrier-protein] dehydratase FabZ">
    <location>
        <begin position="1"/>
        <end position="150"/>
    </location>
</feature>
<feature type="active site" evidence="1">
    <location>
        <position position="51"/>
    </location>
</feature>
<accession>Q5X7N3</accession>
<keyword id="KW-0963">Cytoplasm</keyword>
<keyword id="KW-0441">Lipid A biosynthesis</keyword>
<keyword id="KW-0444">Lipid biosynthesis</keyword>
<keyword id="KW-0443">Lipid metabolism</keyword>
<keyword id="KW-0456">Lyase</keyword>
<gene>
    <name evidence="1" type="primary">fabZ</name>
    <name type="ordered locus">lpp0572</name>
</gene>
<proteinExistence type="inferred from homology"/>
<protein>
    <recommendedName>
        <fullName evidence="1">3-hydroxyacyl-[acyl-carrier-protein] dehydratase FabZ</fullName>
        <ecNumber evidence="1">4.2.1.59</ecNumber>
    </recommendedName>
    <alternativeName>
        <fullName evidence="1">(3R)-hydroxymyristoyl-[acyl-carrier-protein] dehydratase</fullName>
        <shortName evidence="1">(3R)-hydroxymyristoyl-ACP dehydrase</shortName>
    </alternativeName>
    <alternativeName>
        <fullName evidence="1">Beta-hydroxyacyl-ACP dehydratase</fullName>
    </alternativeName>
</protein>
<evidence type="ECO:0000255" key="1">
    <source>
        <dbReference type="HAMAP-Rule" id="MF_00406"/>
    </source>
</evidence>
<dbReference type="EC" id="4.2.1.59" evidence="1"/>
<dbReference type="EMBL" id="CR628336">
    <property type="protein sequence ID" value="CAH11720.1"/>
    <property type="molecule type" value="Genomic_DNA"/>
</dbReference>
<dbReference type="RefSeq" id="WP_011213137.1">
    <property type="nucleotide sequence ID" value="NC_006368.1"/>
</dbReference>
<dbReference type="SMR" id="Q5X7N3"/>
<dbReference type="KEGG" id="lpp:lpp0572"/>
<dbReference type="LegioList" id="lpp0572"/>
<dbReference type="HOGENOM" id="CLU_078912_1_2_6"/>
<dbReference type="GO" id="GO:0005737">
    <property type="term" value="C:cytoplasm"/>
    <property type="evidence" value="ECO:0007669"/>
    <property type="project" value="UniProtKB-SubCell"/>
</dbReference>
<dbReference type="GO" id="GO:0016020">
    <property type="term" value="C:membrane"/>
    <property type="evidence" value="ECO:0007669"/>
    <property type="project" value="GOC"/>
</dbReference>
<dbReference type="GO" id="GO:0019171">
    <property type="term" value="F:(3R)-hydroxyacyl-[acyl-carrier-protein] dehydratase activity"/>
    <property type="evidence" value="ECO:0007669"/>
    <property type="project" value="UniProtKB-EC"/>
</dbReference>
<dbReference type="GO" id="GO:0006633">
    <property type="term" value="P:fatty acid biosynthetic process"/>
    <property type="evidence" value="ECO:0007669"/>
    <property type="project" value="UniProtKB-UniRule"/>
</dbReference>
<dbReference type="GO" id="GO:0009245">
    <property type="term" value="P:lipid A biosynthetic process"/>
    <property type="evidence" value="ECO:0007669"/>
    <property type="project" value="UniProtKB-UniRule"/>
</dbReference>
<dbReference type="CDD" id="cd01288">
    <property type="entry name" value="FabZ"/>
    <property type="match status" value="1"/>
</dbReference>
<dbReference type="FunFam" id="3.10.129.10:FF:000001">
    <property type="entry name" value="3-hydroxyacyl-[acyl-carrier-protein] dehydratase FabZ"/>
    <property type="match status" value="1"/>
</dbReference>
<dbReference type="Gene3D" id="3.10.129.10">
    <property type="entry name" value="Hotdog Thioesterase"/>
    <property type="match status" value="1"/>
</dbReference>
<dbReference type="HAMAP" id="MF_00406">
    <property type="entry name" value="FabZ"/>
    <property type="match status" value="1"/>
</dbReference>
<dbReference type="InterPro" id="IPR013114">
    <property type="entry name" value="FabA_FabZ"/>
</dbReference>
<dbReference type="InterPro" id="IPR010084">
    <property type="entry name" value="FabZ"/>
</dbReference>
<dbReference type="InterPro" id="IPR029069">
    <property type="entry name" value="HotDog_dom_sf"/>
</dbReference>
<dbReference type="NCBIfam" id="TIGR01750">
    <property type="entry name" value="fabZ"/>
    <property type="match status" value="1"/>
</dbReference>
<dbReference type="NCBIfam" id="NF000582">
    <property type="entry name" value="PRK00006.1"/>
    <property type="match status" value="1"/>
</dbReference>
<dbReference type="PANTHER" id="PTHR30272">
    <property type="entry name" value="3-HYDROXYACYL-[ACYL-CARRIER-PROTEIN] DEHYDRATASE"/>
    <property type="match status" value="1"/>
</dbReference>
<dbReference type="PANTHER" id="PTHR30272:SF1">
    <property type="entry name" value="3-HYDROXYACYL-[ACYL-CARRIER-PROTEIN] DEHYDRATASE"/>
    <property type="match status" value="1"/>
</dbReference>
<dbReference type="Pfam" id="PF07977">
    <property type="entry name" value="FabA"/>
    <property type="match status" value="1"/>
</dbReference>
<dbReference type="SUPFAM" id="SSF54637">
    <property type="entry name" value="Thioesterase/thiol ester dehydrase-isomerase"/>
    <property type="match status" value="1"/>
</dbReference>
<name>FABZ_LEGPA</name>
<reference key="1">
    <citation type="journal article" date="2004" name="Nat. Genet.">
        <title>Evidence in the Legionella pneumophila genome for exploitation of host cell functions and high genome plasticity.</title>
        <authorList>
            <person name="Cazalet C."/>
            <person name="Rusniok C."/>
            <person name="Brueggemann H."/>
            <person name="Zidane N."/>
            <person name="Magnier A."/>
            <person name="Ma L."/>
            <person name="Tichit M."/>
            <person name="Jarraud S."/>
            <person name="Bouchier C."/>
            <person name="Vandenesch F."/>
            <person name="Kunst F."/>
            <person name="Etienne J."/>
            <person name="Glaser P."/>
            <person name="Buchrieser C."/>
        </authorList>
    </citation>
    <scope>NUCLEOTIDE SEQUENCE [LARGE SCALE GENOMIC DNA]</scope>
    <source>
        <strain>Paris</strain>
    </source>
</reference>
<comment type="function">
    <text evidence="1">Involved in unsaturated fatty acids biosynthesis. Catalyzes the dehydration of short chain beta-hydroxyacyl-ACPs and long chain saturated and unsaturated beta-hydroxyacyl-ACPs.</text>
</comment>
<comment type="catalytic activity">
    <reaction evidence="1">
        <text>a (3R)-hydroxyacyl-[ACP] = a (2E)-enoyl-[ACP] + H2O</text>
        <dbReference type="Rhea" id="RHEA:13097"/>
        <dbReference type="Rhea" id="RHEA-COMP:9925"/>
        <dbReference type="Rhea" id="RHEA-COMP:9945"/>
        <dbReference type="ChEBI" id="CHEBI:15377"/>
        <dbReference type="ChEBI" id="CHEBI:78784"/>
        <dbReference type="ChEBI" id="CHEBI:78827"/>
        <dbReference type="EC" id="4.2.1.59"/>
    </reaction>
</comment>
<comment type="subcellular location">
    <subcellularLocation>
        <location evidence="1">Cytoplasm</location>
    </subcellularLocation>
</comment>
<comment type="similarity">
    <text evidence="1">Belongs to the thioester dehydratase family. FabZ subfamily.</text>
</comment>